<dbReference type="EMBL" id="AY099028">
    <property type="protein sequence ID" value="AAM44404.1"/>
    <property type="molecule type" value="Genomic_DNA"/>
</dbReference>
<dbReference type="EMBL" id="AAFI02000006">
    <property type="protein sequence ID" value="EAL71698.1"/>
    <property type="molecule type" value="Genomic_DNA"/>
</dbReference>
<dbReference type="RefSeq" id="XP_645637.1">
    <property type="nucleotide sequence ID" value="XM_640545.1"/>
</dbReference>
<dbReference type="SMR" id="Q8MTJ7"/>
<dbReference type="FunCoup" id="Q8MTJ7">
    <property type="interactions" value="149"/>
</dbReference>
<dbReference type="STRING" id="44689.Q8MTJ7"/>
<dbReference type="PaxDb" id="44689-DDB0215340"/>
<dbReference type="EnsemblProtists" id="EAL71698">
    <property type="protein sequence ID" value="EAL71698"/>
    <property type="gene ID" value="DDB_G0271136"/>
</dbReference>
<dbReference type="GeneID" id="8617829"/>
<dbReference type="KEGG" id="ddi:DDB_G0271136"/>
<dbReference type="dictyBase" id="DDB_G0271136">
    <property type="gene designation" value="gafA"/>
</dbReference>
<dbReference type="VEuPathDB" id="AmoebaDB:DDB_G0271136"/>
<dbReference type="eggNOG" id="ENOG502RXXR">
    <property type="taxonomic scope" value="Eukaryota"/>
</dbReference>
<dbReference type="HOGENOM" id="CLU_077738_2_0_1"/>
<dbReference type="InParanoid" id="Q8MTJ7"/>
<dbReference type="OMA" id="FQGPIAC"/>
<dbReference type="PhylomeDB" id="Q8MTJ7"/>
<dbReference type="PRO" id="PR:Q8MTJ7"/>
<dbReference type="Proteomes" id="UP000002195">
    <property type="component" value="Chromosome 2"/>
</dbReference>
<dbReference type="GO" id="GO:0005829">
    <property type="term" value="C:cytosol"/>
    <property type="evidence" value="ECO:0000318"/>
    <property type="project" value="GO_Central"/>
</dbReference>
<dbReference type="GO" id="GO:0033745">
    <property type="term" value="F:L-methionine-(R)-S-oxide reductase activity"/>
    <property type="evidence" value="ECO:0000318"/>
    <property type="project" value="GO_Central"/>
</dbReference>
<dbReference type="FunFam" id="3.30.450.40:FF:000008">
    <property type="entry name" value="GAF domain-containing proteins"/>
    <property type="match status" value="1"/>
</dbReference>
<dbReference type="Gene3D" id="3.30.450.40">
    <property type="match status" value="1"/>
</dbReference>
<dbReference type="InterPro" id="IPR003018">
    <property type="entry name" value="GAF"/>
</dbReference>
<dbReference type="InterPro" id="IPR029016">
    <property type="entry name" value="GAF-like_dom_sf"/>
</dbReference>
<dbReference type="InterPro" id="IPR051330">
    <property type="entry name" value="Phosphatase_reg/MetRdx"/>
</dbReference>
<dbReference type="PANTHER" id="PTHR21021:SF15">
    <property type="entry name" value="FREE METHIONINE-R-SULFOXIDE REDUCTASE"/>
    <property type="match status" value="1"/>
</dbReference>
<dbReference type="PANTHER" id="PTHR21021">
    <property type="entry name" value="GAF/PUTATIVE CYTOSKELETAL PROTEIN"/>
    <property type="match status" value="1"/>
</dbReference>
<dbReference type="Pfam" id="PF13185">
    <property type="entry name" value="GAF_2"/>
    <property type="match status" value="1"/>
</dbReference>
<dbReference type="SUPFAM" id="SSF55781">
    <property type="entry name" value="GAF domain-like"/>
    <property type="match status" value="1"/>
</dbReference>
<organism>
    <name type="scientific">Dictyostelium discoideum</name>
    <name type="common">Social amoeba</name>
    <dbReference type="NCBI Taxonomy" id="44689"/>
    <lineage>
        <taxon>Eukaryota</taxon>
        <taxon>Amoebozoa</taxon>
        <taxon>Evosea</taxon>
        <taxon>Eumycetozoa</taxon>
        <taxon>Dictyostelia</taxon>
        <taxon>Dictyosteliales</taxon>
        <taxon>Dictyosteliaceae</taxon>
        <taxon>Dictyostelium</taxon>
    </lineage>
</organism>
<protein>
    <recommendedName>
        <fullName>GAF domain-containing protein A</fullName>
    </recommendedName>
</protein>
<feature type="chain" id="PRO_0000328249" description="GAF domain-containing protein A">
    <location>
        <begin position="1"/>
        <end position="158"/>
    </location>
</feature>
<feature type="domain" description="GAF">
    <location>
        <begin position="32"/>
        <end position="158"/>
    </location>
</feature>
<evidence type="ECO:0000305" key="1"/>
<proteinExistence type="inferred from homology"/>
<keyword id="KW-1185">Reference proteome</keyword>
<gene>
    <name type="primary">gafA</name>
    <name type="ORF">DDB_G0271136</name>
</gene>
<comment type="similarity">
    <text evidence="1">Belongs to the free Met sulfoxide reductase family.</text>
</comment>
<name>GAFA_DICDI</name>
<reference key="1">
    <citation type="journal article" date="2002" name="Nature">
        <title>Sequence and analysis of chromosome 2 of Dictyostelium discoideum.</title>
        <authorList>
            <person name="Gloeckner G."/>
            <person name="Eichinger L."/>
            <person name="Szafranski K."/>
            <person name="Pachebat J.A."/>
            <person name="Bankier A.T."/>
            <person name="Dear P.H."/>
            <person name="Lehmann R."/>
            <person name="Baumgart C."/>
            <person name="Parra G."/>
            <person name="Abril J.F."/>
            <person name="Guigo R."/>
            <person name="Kumpf K."/>
            <person name="Tunggal B."/>
            <person name="Cox E.C."/>
            <person name="Quail M.A."/>
            <person name="Platzer M."/>
            <person name="Rosenthal A."/>
            <person name="Noegel A.A."/>
        </authorList>
    </citation>
    <scope>NUCLEOTIDE SEQUENCE [LARGE SCALE GENOMIC DNA]</scope>
    <source>
        <strain>AX4</strain>
    </source>
</reference>
<reference key="2">
    <citation type="journal article" date="2005" name="Nature">
        <title>The genome of the social amoeba Dictyostelium discoideum.</title>
        <authorList>
            <person name="Eichinger L."/>
            <person name="Pachebat J.A."/>
            <person name="Gloeckner G."/>
            <person name="Rajandream M.A."/>
            <person name="Sucgang R."/>
            <person name="Berriman M."/>
            <person name="Song J."/>
            <person name="Olsen R."/>
            <person name="Szafranski K."/>
            <person name="Xu Q."/>
            <person name="Tunggal B."/>
            <person name="Kummerfeld S."/>
            <person name="Madera M."/>
            <person name="Konfortov B.A."/>
            <person name="Rivero F."/>
            <person name="Bankier A.T."/>
            <person name="Lehmann R."/>
            <person name="Hamlin N."/>
            <person name="Davies R."/>
            <person name="Gaudet P."/>
            <person name="Fey P."/>
            <person name="Pilcher K."/>
            <person name="Chen G."/>
            <person name="Saunders D."/>
            <person name="Sodergren E.J."/>
            <person name="Davis P."/>
            <person name="Kerhornou A."/>
            <person name="Nie X."/>
            <person name="Hall N."/>
            <person name="Anjard C."/>
            <person name="Hemphill L."/>
            <person name="Bason N."/>
            <person name="Farbrother P."/>
            <person name="Desany B."/>
            <person name="Just E."/>
            <person name="Morio T."/>
            <person name="Rost R."/>
            <person name="Churcher C.M."/>
            <person name="Cooper J."/>
            <person name="Haydock S."/>
            <person name="van Driessche N."/>
            <person name="Cronin A."/>
            <person name="Goodhead I."/>
            <person name="Muzny D.M."/>
            <person name="Mourier T."/>
            <person name="Pain A."/>
            <person name="Lu M."/>
            <person name="Harper D."/>
            <person name="Lindsay R."/>
            <person name="Hauser H."/>
            <person name="James K.D."/>
            <person name="Quiles M."/>
            <person name="Madan Babu M."/>
            <person name="Saito T."/>
            <person name="Buchrieser C."/>
            <person name="Wardroper A."/>
            <person name="Felder M."/>
            <person name="Thangavelu M."/>
            <person name="Johnson D."/>
            <person name="Knights A."/>
            <person name="Loulseged H."/>
            <person name="Mungall K.L."/>
            <person name="Oliver K."/>
            <person name="Price C."/>
            <person name="Quail M.A."/>
            <person name="Urushihara H."/>
            <person name="Hernandez J."/>
            <person name="Rabbinowitsch E."/>
            <person name="Steffen D."/>
            <person name="Sanders M."/>
            <person name="Ma J."/>
            <person name="Kohara Y."/>
            <person name="Sharp S."/>
            <person name="Simmonds M.N."/>
            <person name="Spiegler S."/>
            <person name="Tivey A."/>
            <person name="Sugano S."/>
            <person name="White B."/>
            <person name="Walker D."/>
            <person name="Woodward J.R."/>
            <person name="Winckler T."/>
            <person name="Tanaka Y."/>
            <person name="Shaulsky G."/>
            <person name="Schleicher M."/>
            <person name="Weinstock G.M."/>
            <person name="Rosenthal A."/>
            <person name="Cox E.C."/>
            <person name="Chisholm R.L."/>
            <person name="Gibbs R.A."/>
            <person name="Loomis W.F."/>
            <person name="Platzer M."/>
            <person name="Kay R.R."/>
            <person name="Williams J.G."/>
            <person name="Dear P.H."/>
            <person name="Noegel A.A."/>
            <person name="Barrell B.G."/>
            <person name="Kuspa A."/>
        </authorList>
    </citation>
    <scope>NUCLEOTIDE SEQUENCE [LARGE SCALE GENOMIC DNA]</scope>
    <source>
        <strain>AX4</strain>
    </source>
</reference>
<reference key="3">
    <citation type="journal article" date="2002" name="Proc. Natl. Acad. Sci. U.S.A.">
        <title>Identification of four candidate cGMP targets in Dictyostelium.</title>
        <authorList>
            <person name="Goldberg J.M."/>
            <person name="Bosgraaf L."/>
            <person name="Van Haastert P.J.M."/>
            <person name="Smith J.L."/>
        </authorList>
    </citation>
    <scope>IDENTIFICATION</scope>
</reference>
<sequence length="158" mass="17663">MAEDLEISKGSKEEQYENLLPQIEGLLTGENNQIANLANVTAALKEQFNFFWVGFYLVDTENELVLAPFQGPIACTRIRKGRGVCGTAWQQEKTLIVPDVEKFPGHIACSSLSKSEIVLPLYKQGNIIGVLDVDSDKLNSFDEIDEKYLTQILKLLDN</sequence>
<accession>Q8MTJ7</accession>
<accession>Q55BH5</accession>